<evidence type="ECO:0000255" key="1">
    <source>
        <dbReference type="HAMAP-Rule" id="MF_00044"/>
    </source>
</evidence>
<comment type="function">
    <text evidence="1">Catalyzes the attachment of L-aspartate to tRNA(Asp) in a two-step reaction: L-aspartate is first activated by ATP to form Asp-AMP and then transferred to the acceptor end of tRNA(Asp).</text>
</comment>
<comment type="catalytic activity">
    <reaction evidence="1">
        <text>tRNA(Asp) + L-aspartate + ATP = L-aspartyl-tRNA(Asp) + AMP + diphosphate</text>
        <dbReference type="Rhea" id="RHEA:19649"/>
        <dbReference type="Rhea" id="RHEA-COMP:9660"/>
        <dbReference type="Rhea" id="RHEA-COMP:9678"/>
        <dbReference type="ChEBI" id="CHEBI:29991"/>
        <dbReference type="ChEBI" id="CHEBI:30616"/>
        <dbReference type="ChEBI" id="CHEBI:33019"/>
        <dbReference type="ChEBI" id="CHEBI:78442"/>
        <dbReference type="ChEBI" id="CHEBI:78516"/>
        <dbReference type="ChEBI" id="CHEBI:456215"/>
        <dbReference type="EC" id="6.1.1.12"/>
    </reaction>
</comment>
<comment type="subunit">
    <text evidence="1">Homodimer.</text>
</comment>
<comment type="subcellular location">
    <subcellularLocation>
        <location evidence="1">Cytoplasm</location>
    </subcellularLocation>
</comment>
<comment type="similarity">
    <text evidence="1">Belongs to the class-II aminoacyl-tRNA synthetase family. Type 1 subfamily.</text>
</comment>
<feature type="chain" id="PRO_1000090980" description="Aspartate--tRNA ligase">
    <location>
        <begin position="1"/>
        <end position="599"/>
    </location>
</feature>
<feature type="region of interest" description="Aspartate" evidence="1">
    <location>
        <begin position="204"/>
        <end position="207"/>
    </location>
</feature>
<feature type="binding site" evidence="1">
    <location>
        <position position="180"/>
    </location>
    <ligand>
        <name>L-aspartate</name>
        <dbReference type="ChEBI" id="CHEBI:29991"/>
    </ligand>
</feature>
<feature type="binding site" evidence="1">
    <location>
        <begin position="226"/>
        <end position="228"/>
    </location>
    <ligand>
        <name>ATP</name>
        <dbReference type="ChEBI" id="CHEBI:30616"/>
    </ligand>
</feature>
<feature type="binding site" evidence="1">
    <location>
        <position position="226"/>
    </location>
    <ligand>
        <name>L-aspartate</name>
        <dbReference type="ChEBI" id="CHEBI:29991"/>
    </ligand>
</feature>
<feature type="binding site" evidence="1">
    <location>
        <position position="235"/>
    </location>
    <ligand>
        <name>ATP</name>
        <dbReference type="ChEBI" id="CHEBI:30616"/>
    </ligand>
</feature>
<feature type="binding site" evidence="1">
    <location>
        <position position="454"/>
    </location>
    <ligand>
        <name>L-aspartate</name>
        <dbReference type="ChEBI" id="CHEBI:29991"/>
    </ligand>
</feature>
<feature type="binding site" evidence="1">
    <location>
        <position position="488"/>
    </location>
    <ligand>
        <name>ATP</name>
        <dbReference type="ChEBI" id="CHEBI:30616"/>
    </ligand>
</feature>
<feature type="binding site" evidence="1">
    <location>
        <position position="495"/>
    </location>
    <ligand>
        <name>L-aspartate</name>
        <dbReference type="ChEBI" id="CHEBI:29991"/>
    </ligand>
</feature>
<feature type="binding site" evidence="1">
    <location>
        <begin position="540"/>
        <end position="543"/>
    </location>
    <ligand>
        <name>ATP</name>
        <dbReference type="ChEBI" id="CHEBI:30616"/>
    </ligand>
</feature>
<reference key="1">
    <citation type="submission" date="2008-05" db="EMBL/GenBank/DDBJ databases">
        <title>Complete genome sequence of Clostridium botulinum E3 str. Alaska E43.</title>
        <authorList>
            <person name="Brinkac L.M."/>
            <person name="Brown J.L."/>
            <person name="Bruce D."/>
            <person name="Detter C."/>
            <person name="Munk C."/>
            <person name="Smith L.A."/>
            <person name="Smith T.J."/>
            <person name="Sutton G."/>
            <person name="Brettin T.S."/>
        </authorList>
    </citation>
    <scope>NUCLEOTIDE SEQUENCE [LARGE SCALE GENOMIC DNA]</scope>
    <source>
        <strain>Alaska E43 / Type E3</strain>
    </source>
</reference>
<sequence>MGEALNGLKRTMMCGEPREEHVGQKITLMGWVQRNRKLGGLDFIDLRDKTGIMQVVFGEEINAEAFEKAKGVRPEYCIAVTGEVVKRESVNENMPTGFVELKCQSLKILSESETPPIYIKENLDAAENIRLKYRYLDLRRPDMHRIFEIRSKTTKSIRDYLEKNDFLDVETPMLTKSTPEGARDYLVPSRNYPGMFYALPQSPQIFKQLLMVSGFDKYYQIVKCFRDEDLRANRQPEFTQVDMELSFVEQDDIMALNEGLIAHVFKEVAGVDVKLPIKRMTFKDAMEKYGSDKPDLRFGMEITNITEDVKDMDFVVFKSAIEAGGSVRALCLKGGAALGRKPLDKLGEFVKTYKAKGLAWIQLKEDGVKSSIAKFLTDDVTNSIIETMGAETGDAILIVADKESVVFQSLGALRLELAKQFELIKDKNEFNFTWITEFPLFEYSEEEERYTACHHPFTAPMEEDLDFLESAPGKVRSKAYDLVLNGEELGGGSIRIHDMELQQRMFKALGFTEEQAWERFGFLLQAFKFGPPPHGGLAFGLDRMIMFLAGTENIKDVIAFPKNQNAYCYLSEAPNIADEKQLTELGIGILPKQEKQEQE</sequence>
<proteinExistence type="inferred from homology"/>
<name>SYD_CLOBA</name>
<protein>
    <recommendedName>
        <fullName evidence="1">Aspartate--tRNA ligase</fullName>
        <ecNumber evidence="1">6.1.1.12</ecNumber>
    </recommendedName>
    <alternativeName>
        <fullName evidence="1">Aspartyl-tRNA synthetase</fullName>
        <shortName evidence="1">AspRS</shortName>
    </alternativeName>
</protein>
<dbReference type="EC" id="6.1.1.12" evidence="1"/>
<dbReference type="EMBL" id="CP001078">
    <property type="protein sequence ID" value="ACD51530.1"/>
    <property type="molecule type" value="Genomic_DNA"/>
</dbReference>
<dbReference type="RefSeq" id="WP_012449867.1">
    <property type="nucleotide sequence ID" value="NC_010723.1"/>
</dbReference>
<dbReference type="SMR" id="B2V351"/>
<dbReference type="KEGG" id="cbt:CLH_0970"/>
<dbReference type="HOGENOM" id="CLU_014330_3_2_9"/>
<dbReference type="GO" id="GO:0005737">
    <property type="term" value="C:cytoplasm"/>
    <property type="evidence" value="ECO:0007669"/>
    <property type="project" value="UniProtKB-SubCell"/>
</dbReference>
<dbReference type="GO" id="GO:0004815">
    <property type="term" value="F:aspartate-tRNA ligase activity"/>
    <property type="evidence" value="ECO:0007669"/>
    <property type="project" value="UniProtKB-UniRule"/>
</dbReference>
<dbReference type="GO" id="GO:0005524">
    <property type="term" value="F:ATP binding"/>
    <property type="evidence" value="ECO:0007669"/>
    <property type="project" value="UniProtKB-UniRule"/>
</dbReference>
<dbReference type="GO" id="GO:0140096">
    <property type="term" value="F:catalytic activity, acting on a protein"/>
    <property type="evidence" value="ECO:0007669"/>
    <property type="project" value="UniProtKB-ARBA"/>
</dbReference>
<dbReference type="GO" id="GO:0003676">
    <property type="term" value="F:nucleic acid binding"/>
    <property type="evidence" value="ECO:0007669"/>
    <property type="project" value="InterPro"/>
</dbReference>
<dbReference type="GO" id="GO:0016740">
    <property type="term" value="F:transferase activity"/>
    <property type="evidence" value="ECO:0007669"/>
    <property type="project" value="UniProtKB-ARBA"/>
</dbReference>
<dbReference type="GO" id="GO:0006422">
    <property type="term" value="P:aspartyl-tRNA aminoacylation"/>
    <property type="evidence" value="ECO:0007669"/>
    <property type="project" value="UniProtKB-UniRule"/>
</dbReference>
<dbReference type="CDD" id="cd00777">
    <property type="entry name" value="AspRS_core"/>
    <property type="match status" value="1"/>
</dbReference>
<dbReference type="CDD" id="cd04317">
    <property type="entry name" value="EcAspRS_like_N"/>
    <property type="match status" value="1"/>
</dbReference>
<dbReference type="Gene3D" id="3.30.930.10">
    <property type="entry name" value="Bira Bifunctional Protein, Domain 2"/>
    <property type="match status" value="1"/>
</dbReference>
<dbReference type="Gene3D" id="3.30.1360.30">
    <property type="entry name" value="GAD-like domain"/>
    <property type="match status" value="1"/>
</dbReference>
<dbReference type="Gene3D" id="2.40.50.140">
    <property type="entry name" value="Nucleic acid-binding proteins"/>
    <property type="match status" value="1"/>
</dbReference>
<dbReference type="HAMAP" id="MF_00044">
    <property type="entry name" value="Asp_tRNA_synth_type1"/>
    <property type="match status" value="1"/>
</dbReference>
<dbReference type="InterPro" id="IPR004364">
    <property type="entry name" value="Aa-tRNA-synt_II"/>
</dbReference>
<dbReference type="InterPro" id="IPR006195">
    <property type="entry name" value="aa-tRNA-synth_II"/>
</dbReference>
<dbReference type="InterPro" id="IPR045864">
    <property type="entry name" value="aa-tRNA-synth_II/BPL/LPL"/>
</dbReference>
<dbReference type="InterPro" id="IPR004524">
    <property type="entry name" value="Asp-tRNA-ligase_1"/>
</dbReference>
<dbReference type="InterPro" id="IPR047089">
    <property type="entry name" value="Asp-tRNA-ligase_1_N"/>
</dbReference>
<dbReference type="InterPro" id="IPR002312">
    <property type="entry name" value="Asp/Asn-tRNA-synth_IIb"/>
</dbReference>
<dbReference type="InterPro" id="IPR047090">
    <property type="entry name" value="AspRS_core"/>
</dbReference>
<dbReference type="InterPro" id="IPR004115">
    <property type="entry name" value="GAD-like_sf"/>
</dbReference>
<dbReference type="InterPro" id="IPR029351">
    <property type="entry name" value="GAD_dom"/>
</dbReference>
<dbReference type="InterPro" id="IPR012340">
    <property type="entry name" value="NA-bd_OB-fold"/>
</dbReference>
<dbReference type="InterPro" id="IPR004365">
    <property type="entry name" value="NA-bd_OB_tRNA"/>
</dbReference>
<dbReference type="NCBIfam" id="TIGR00459">
    <property type="entry name" value="aspS_bact"/>
    <property type="match status" value="1"/>
</dbReference>
<dbReference type="NCBIfam" id="NF001750">
    <property type="entry name" value="PRK00476.1"/>
    <property type="match status" value="1"/>
</dbReference>
<dbReference type="PANTHER" id="PTHR22594:SF5">
    <property type="entry name" value="ASPARTATE--TRNA LIGASE, MITOCHONDRIAL"/>
    <property type="match status" value="1"/>
</dbReference>
<dbReference type="PANTHER" id="PTHR22594">
    <property type="entry name" value="ASPARTYL/LYSYL-TRNA SYNTHETASE"/>
    <property type="match status" value="1"/>
</dbReference>
<dbReference type="Pfam" id="PF02938">
    <property type="entry name" value="GAD"/>
    <property type="match status" value="1"/>
</dbReference>
<dbReference type="Pfam" id="PF00152">
    <property type="entry name" value="tRNA-synt_2"/>
    <property type="match status" value="1"/>
</dbReference>
<dbReference type="Pfam" id="PF01336">
    <property type="entry name" value="tRNA_anti-codon"/>
    <property type="match status" value="1"/>
</dbReference>
<dbReference type="PRINTS" id="PR01042">
    <property type="entry name" value="TRNASYNTHASP"/>
</dbReference>
<dbReference type="SUPFAM" id="SSF55681">
    <property type="entry name" value="Class II aaRS and biotin synthetases"/>
    <property type="match status" value="1"/>
</dbReference>
<dbReference type="SUPFAM" id="SSF55261">
    <property type="entry name" value="GAD domain-like"/>
    <property type="match status" value="1"/>
</dbReference>
<dbReference type="SUPFAM" id="SSF50249">
    <property type="entry name" value="Nucleic acid-binding proteins"/>
    <property type="match status" value="1"/>
</dbReference>
<dbReference type="PROSITE" id="PS50862">
    <property type="entry name" value="AA_TRNA_LIGASE_II"/>
    <property type="match status" value="1"/>
</dbReference>
<gene>
    <name evidence="1" type="primary">aspS</name>
    <name type="ordered locus">CLH_0970</name>
</gene>
<organism>
    <name type="scientific">Clostridium botulinum (strain Alaska E43 / Type E3)</name>
    <dbReference type="NCBI Taxonomy" id="508767"/>
    <lineage>
        <taxon>Bacteria</taxon>
        <taxon>Bacillati</taxon>
        <taxon>Bacillota</taxon>
        <taxon>Clostridia</taxon>
        <taxon>Eubacteriales</taxon>
        <taxon>Clostridiaceae</taxon>
        <taxon>Clostridium</taxon>
    </lineage>
</organism>
<keyword id="KW-0030">Aminoacyl-tRNA synthetase</keyword>
<keyword id="KW-0067">ATP-binding</keyword>
<keyword id="KW-0963">Cytoplasm</keyword>
<keyword id="KW-0436">Ligase</keyword>
<keyword id="KW-0547">Nucleotide-binding</keyword>
<keyword id="KW-0648">Protein biosynthesis</keyword>
<accession>B2V351</accession>